<dbReference type="EMBL" id="DP000020">
    <property type="protein sequence ID" value="ABB89804.1"/>
    <property type="molecule type" value="Genomic_DNA"/>
</dbReference>
<dbReference type="RefSeq" id="NP_001107622.1">
    <property type="nucleotide sequence ID" value="NM_001114150.1"/>
</dbReference>
<dbReference type="SMR" id="Q2QLA5"/>
<dbReference type="FunCoup" id="Q2QLA5">
    <property type="interactions" value="192"/>
</dbReference>
<dbReference type="STRING" id="9796.ENSECAP00000022226"/>
<dbReference type="GlyCosmos" id="Q2QLA5">
    <property type="glycosylation" value="1 site, No reported glycans"/>
</dbReference>
<dbReference type="PaxDb" id="9796-ENSECAP00000022226"/>
<dbReference type="Ensembl" id="ENSECAT00000026622.2">
    <property type="protein sequence ID" value="ENSECAP00000022226.1"/>
    <property type="gene ID" value="ENSECAG00000024641.4"/>
</dbReference>
<dbReference type="GeneID" id="100056092"/>
<dbReference type="KEGG" id="ecb:100056092"/>
<dbReference type="CTD" id="7472"/>
<dbReference type="VGNC" id="VGNC:25044">
    <property type="gene designation" value="WNT2"/>
</dbReference>
<dbReference type="GeneTree" id="ENSGT00940000159231"/>
<dbReference type="HOGENOM" id="CLU_033039_1_4_1"/>
<dbReference type="InParanoid" id="Q2QLA5"/>
<dbReference type="OMA" id="ITRMTKC"/>
<dbReference type="OrthoDB" id="5945655at2759"/>
<dbReference type="TreeFam" id="TF105310"/>
<dbReference type="Proteomes" id="UP000002281">
    <property type="component" value="Chromosome 4"/>
</dbReference>
<dbReference type="Bgee" id="ENSECAG00000024641">
    <property type="expression patterns" value="Expressed in endometrium and 13 other cell types or tissues"/>
</dbReference>
<dbReference type="ExpressionAtlas" id="Q2QLA5">
    <property type="expression patterns" value="baseline"/>
</dbReference>
<dbReference type="GO" id="GO:0005737">
    <property type="term" value="C:cytoplasm"/>
    <property type="evidence" value="ECO:0007669"/>
    <property type="project" value="Ensembl"/>
</dbReference>
<dbReference type="GO" id="GO:0005615">
    <property type="term" value="C:extracellular space"/>
    <property type="evidence" value="ECO:0000318"/>
    <property type="project" value="GO_Central"/>
</dbReference>
<dbReference type="GO" id="GO:0005125">
    <property type="term" value="F:cytokine activity"/>
    <property type="evidence" value="ECO:0000318"/>
    <property type="project" value="GO_Central"/>
</dbReference>
<dbReference type="GO" id="GO:0005109">
    <property type="term" value="F:frizzled binding"/>
    <property type="evidence" value="ECO:0000318"/>
    <property type="project" value="GO_Central"/>
</dbReference>
<dbReference type="GO" id="GO:0055009">
    <property type="term" value="P:atrial cardiac muscle tissue morphogenesis"/>
    <property type="evidence" value="ECO:0007669"/>
    <property type="project" value="Ensembl"/>
</dbReference>
<dbReference type="GO" id="GO:0060070">
    <property type="term" value="P:canonical Wnt signaling pathway"/>
    <property type="evidence" value="ECO:0000318"/>
    <property type="project" value="GO_Central"/>
</dbReference>
<dbReference type="GO" id="GO:0060317">
    <property type="term" value="P:cardiac epithelial to mesenchymal transition"/>
    <property type="evidence" value="ECO:0007669"/>
    <property type="project" value="Ensembl"/>
</dbReference>
<dbReference type="GO" id="GO:0060038">
    <property type="term" value="P:cardiac muscle cell proliferation"/>
    <property type="evidence" value="ECO:0007669"/>
    <property type="project" value="Ensembl"/>
</dbReference>
<dbReference type="GO" id="GO:0045165">
    <property type="term" value="P:cell fate commitment"/>
    <property type="evidence" value="ECO:0000318"/>
    <property type="project" value="GO_Central"/>
</dbReference>
<dbReference type="GO" id="GO:0033278">
    <property type="term" value="P:cell proliferation in midbrain"/>
    <property type="evidence" value="ECO:0007669"/>
    <property type="project" value="Ensembl"/>
</dbReference>
<dbReference type="GO" id="GO:0007267">
    <property type="term" value="P:cell-cell signaling"/>
    <property type="evidence" value="ECO:0007669"/>
    <property type="project" value="Ensembl"/>
</dbReference>
<dbReference type="GO" id="GO:0071560">
    <property type="term" value="P:cellular response to transforming growth factor beta stimulus"/>
    <property type="evidence" value="ECO:0007669"/>
    <property type="project" value="Ensembl"/>
</dbReference>
<dbReference type="GO" id="GO:0060502">
    <property type="term" value="P:epithelial cell proliferation involved in lung morphogenesis"/>
    <property type="evidence" value="ECO:0007669"/>
    <property type="project" value="Ensembl"/>
</dbReference>
<dbReference type="GO" id="GO:0060716">
    <property type="term" value="P:labyrinthine layer blood vessel development"/>
    <property type="evidence" value="ECO:0007669"/>
    <property type="project" value="Ensembl"/>
</dbReference>
<dbReference type="GO" id="GO:0060492">
    <property type="term" value="P:lung induction"/>
    <property type="evidence" value="ECO:0007669"/>
    <property type="project" value="Ensembl"/>
</dbReference>
<dbReference type="GO" id="GO:0061180">
    <property type="term" value="P:mammary gland epithelium development"/>
    <property type="evidence" value="ECO:0007669"/>
    <property type="project" value="Ensembl"/>
</dbReference>
<dbReference type="GO" id="GO:0010463">
    <property type="term" value="P:mesenchymal cell proliferation"/>
    <property type="evidence" value="ECO:0007669"/>
    <property type="project" value="Ensembl"/>
</dbReference>
<dbReference type="GO" id="GO:1904948">
    <property type="term" value="P:midbrain dopaminergic neuron differentiation"/>
    <property type="evidence" value="ECO:0007669"/>
    <property type="project" value="Ensembl"/>
</dbReference>
<dbReference type="GO" id="GO:0030182">
    <property type="term" value="P:neuron differentiation"/>
    <property type="evidence" value="ECO:0000318"/>
    <property type="project" value="GO_Central"/>
</dbReference>
<dbReference type="GO" id="GO:0060045">
    <property type="term" value="P:positive regulation of cardiac muscle cell proliferation"/>
    <property type="evidence" value="ECO:0007669"/>
    <property type="project" value="Ensembl"/>
</dbReference>
<dbReference type="GO" id="GO:0060501">
    <property type="term" value="P:positive regulation of epithelial cell proliferation involved in lung morphogenesis"/>
    <property type="evidence" value="ECO:0007669"/>
    <property type="project" value="Ensembl"/>
</dbReference>
<dbReference type="GO" id="GO:0048146">
    <property type="term" value="P:positive regulation of fibroblast proliferation"/>
    <property type="evidence" value="ECO:0007669"/>
    <property type="project" value="Ensembl"/>
</dbReference>
<dbReference type="GO" id="GO:0002053">
    <property type="term" value="P:positive regulation of mesenchymal cell proliferation"/>
    <property type="evidence" value="ECO:0007669"/>
    <property type="project" value="Ensembl"/>
</dbReference>
<dbReference type="GO" id="GO:0050769">
    <property type="term" value="P:positive regulation of neurogenesis"/>
    <property type="evidence" value="ECO:0007669"/>
    <property type="project" value="Ensembl"/>
</dbReference>
<dbReference type="GO" id="GO:0045944">
    <property type="term" value="P:positive regulation of transcription by RNA polymerase II"/>
    <property type="evidence" value="ECO:0007669"/>
    <property type="project" value="Ensembl"/>
</dbReference>
<dbReference type="CDD" id="cd19345">
    <property type="entry name" value="Wnt_Wnt2"/>
    <property type="match status" value="1"/>
</dbReference>
<dbReference type="FunFam" id="3.30.2460.20:FF:000001">
    <property type="entry name" value="Wnt homolog"/>
    <property type="match status" value="1"/>
</dbReference>
<dbReference type="Gene3D" id="3.30.2460.20">
    <property type="match status" value="1"/>
</dbReference>
<dbReference type="InterPro" id="IPR005817">
    <property type="entry name" value="Wnt"/>
</dbReference>
<dbReference type="InterPro" id="IPR009140">
    <property type="entry name" value="Wnt2"/>
</dbReference>
<dbReference type="InterPro" id="IPR043158">
    <property type="entry name" value="Wnt_C"/>
</dbReference>
<dbReference type="InterPro" id="IPR018161">
    <property type="entry name" value="Wnt_CS"/>
</dbReference>
<dbReference type="PANTHER" id="PTHR12027:SF86">
    <property type="entry name" value="PROTEIN WNT-2"/>
    <property type="match status" value="1"/>
</dbReference>
<dbReference type="PANTHER" id="PTHR12027">
    <property type="entry name" value="WNT RELATED"/>
    <property type="match status" value="1"/>
</dbReference>
<dbReference type="Pfam" id="PF00110">
    <property type="entry name" value="wnt"/>
    <property type="match status" value="1"/>
</dbReference>
<dbReference type="PRINTS" id="PR01842">
    <property type="entry name" value="WNT2PROTEIN"/>
</dbReference>
<dbReference type="PRINTS" id="PR01349">
    <property type="entry name" value="WNTPROTEIN"/>
</dbReference>
<dbReference type="SMART" id="SM00097">
    <property type="entry name" value="WNT1"/>
    <property type="match status" value="1"/>
</dbReference>
<dbReference type="PROSITE" id="PS00246">
    <property type="entry name" value="WNT1"/>
    <property type="match status" value="1"/>
</dbReference>
<proteinExistence type="inferred from homology"/>
<comment type="function">
    <text evidence="1 2">Ligand for members of the frizzled family of seven transmembrane receptors. Functions in the canonical Wnt signaling pathway that results in activation of transcription factors of the TCF/LEF family (By similarity). Functions as a upstream regulator of FGF10 expression. Plays an important role in embryonic lung development. May contribute to embryonic brain development by regulating the proliferation of dopaminergic precursors and neurons (By similarity).</text>
</comment>
<comment type="subcellular location">
    <subcellularLocation>
        <location evidence="1">Secreted</location>
        <location evidence="1">Extracellular space</location>
        <location evidence="1">Extracellular matrix</location>
    </subcellularLocation>
    <subcellularLocation>
        <location evidence="1">Secreted</location>
    </subcellularLocation>
</comment>
<comment type="PTM">
    <text evidence="1">Palmitoleoylation is required for efficient binding to frizzled receptors. Depalmitoleoylation leads to Wnt signaling pathway inhibition.</text>
</comment>
<comment type="similarity">
    <text evidence="6">Belongs to the Wnt family.</text>
</comment>
<evidence type="ECO:0000250" key="1">
    <source>
        <dbReference type="UniProtKB" id="P09544"/>
    </source>
</evidence>
<evidence type="ECO:0000250" key="2">
    <source>
        <dbReference type="UniProtKB" id="P21552"/>
    </source>
</evidence>
<evidence type="ECO:0000250" key="3">
    <source>
        <dbReference type="UniProtKB" id="P28026"/>
    </source>
</evidence>
<evidence type="ECO:0000250" key="4">
    <source>
        <dbReference type="UniProtKB" id="P56704"/>
    </source>
</evidence>
<evidence type="ECO:0000255" key="5"/>
<evidence type="ECO:0000305" key="6"/>
<gene>
    <name type="primary">WNT2</name>
</gene>
<accession>Q2QLA5</accession>
<reference key="1">
    <citation type="submission" date="2005-11" db="EMBL/GenBank/DDBJ databases">
        <title>NISC comparative sequencing initiative.</title>
        <authorList>
            <person name="Antonellis A."/>
            <person name="Ayele K."/>
            <person name="Benjamin B."/>
            <person name="Blakesley R.W."/>
            <person name="Boakye A."/>
            <person name="Bouffard G.G."/>
            <person name="Brinkley C."/>
            <person name="Brooks S."/>
            <person name="Chu G."/>
            <person name="Coleman H."/>
            <person name="Engle J."/>
            <person name="Gestole M."/>
            <person name="Greene A."/>
            <person name="Guan X."/>
            <person name="Gupta J."/>
            <person name="Haghighi P."/>
            <person name="Han J."/>
            <person name="Hansen N."/>
            <person name="Ho S.-L."/>
            <person name="Hu P."/>
            <person name="Hunter G."/>
            <person name="Hurle B."/>
            <person name="Idol J.R."/>
            <person name="Kwong P."/>
            <person name="Laric P."/>
            <person name="Larson S."/>
            <person name="Lee-Lin S.-Q."/>
            <person name="Legaspi R."/>
            <person name="Madden M."/>
            <person name="Maduro Q.L."/>
            <person name="Maduro V.B."/>
            <person name="Margulies E.H."/>
            <person name="Masiello C."/>
            <person name="Maskeri B."/>
            <person name="McDowell J."/>
            <person name="Mojidi H.A."/>
            <person name="Mullikin J.C."/>
            <person name="Oestreicher J.S."/>
            <person name="Park M."/>
            <person name="Portnoy M.E."/>
            <person name="Prasad A."/>
            <person name="Puri O."/>
            <person name="Reddix-Dugue N."/>
            <person name="Schandler K."/>
            <person name="Schueler M.G."/>
            <person name="Sison C."/>
            <person name="Stantripop S."/>
            <person name="Stephen E."/>
            <person name="Taye A."/>
            <person name="Thomas J.W."/>
            <person name="Thomas P.J."/>
            <person name="Tsipouri V."/>
            <person name="Ung L."/>
            <person name="Vogt J.L."/>
            <person name="Wetherby K.D."/>
            <person name="Young A."/>
            <person name="Green E.D."/>
        </authorList>
    </citation>
    <scope>NUCLEOTIDE SEQUENCE [LARGE SCALE GENOMIC DNA]</scope>
</reference>
<feature type="signal peptide" evidence="5">
    <location>
        <begin position="1"/>
        <end position="25"/>
    </location>
</feature>
<feature type="chain" id="PRO_0000226064" description="Protein Wnt-2">
    <location>
        <begin position="26"/>
        <end position="360"/>
    </location>
</feature>
<feature type="lipid moiety-binding region" description="O-palmitoleoyl serine; by PORCN" evidence="4">
    <location>
        <position position="212"/>
    </location>
</feature>
<feature type="glycosylation site" description="N-linked (GlcNAc...) asparagine" evidence="5">
    <location>
        <position position="295"/>
    </location>
</feature>
<feature type="disulfide bond" evidence="3">
    <location>
        <begin position="76"/>
        <end position="87"/>
    </location>
</feature>
<feature type="disulfide bond" evidence="3">
    <location>
        <begin position="127"/>
        <end position="135"/>
    </location>
</feature>
<feature type="disulfide bond" evidence="3">
    <location>
        <begin position="137"/>
        <end position="157"/>
    </location>
</feature>
<feature type="disulfide bond" evidence="3">
    <location>
        <begin position="206"/>
        <end position="220"/>
    </location>
</feature>
<feature type="disulfide bond" evidence="3">
    <location>
        <begin position="208"/>
        <end position="215"/>
    </location>
</feature>
<feature type="disulfide bond" evidence="3">
    <location>
        <begin position="278"/>
        <end position="309"/>
    </location>
</feature>
<feature type="disulfide bond" evidence="3">
    <location>
        <begin position="294"/>
        <end position="304"/>
    </location>
</feature>
<feature type="disulfide bond" evidence="3">
    <location>
        <begin position="308"/>
        <end position="348"/>
    </location>
</feature>
<feature type="disulfide bond" evidence="3">
    <location>
        <begin position="324"/>
        <end position="339"/>
    </location>
</feature>
<feature type="disulfide bond" evidence="3">
    <location>
        <begin position="326"/>
        <end position="336"/>
    </location>
</feature>
<feature type="disulfide bond" evidence="3">
    <location>
        <begin position="331"/>
        <end position="332"/>
    </location>
</feature>
<name>WNT2_HORSE</name>
<organism>
    <name type="scientific">Equus caballus</name>
    <name type="common">Horse</name>
    <dbReference type="NCBI Taxonomy" id="9796"/>
    <lineage>
        <taxon>Eukaryota</taxon>
        <taxon>Metazoa</taxon>
        <taxon>Chordata</taxon>
        <taxon>Craniata</taxon>
        <taxon>Vertebrata</taxon>
        <taxon>Euteleostomi</taxon>
        <taxon>Mammalia</taxon>
        <taxon>Eutheria</taxon>
        <taxon>Laurasiatheria</taxon>
        <taxon>Perissodactyla</taxon>
        <taxon>Equidae</taxon>
        <taxon>Equus</taxon>
    </lineage>
</organism>
<keyword id="KW-0217">Developmental protein</keyword>
<keyword id="KW-1015">Disulfide bond</keyword>
<keyword id="KW-0272">Extracellular matrix</keyword>
<keyword id="KW-0325">Glycoprotein</keyword>
<keyword id="KW-0449">Lipoprotein</keyword>
<keyword id="KW-1185">Reference proteome</keyword>
<keyword id="KW-0964">Secreted</keyword>
<keyword id="KW-0732">Signal</keyword>
<keyword id="KW-0879">Wnt signaling pathway</keyword>
<sequence length="360" mass="40443">MNAPLGGIWLWLPLLLTWLTPEVSSSWWYMRATGGASRVMCDNVPGLVSRQRQLCHRHPDVMRAIGLGVAEWTAECQHQFRQHRWNCNTLDRDHSLFGRVLLRSSRESAFVYAISSAGVVFAITRACSQGELRSCSCDPKKKGTAKDSKGTFDWGGCSDNIDYGIKFARAFVDAKERKGKDARALMNLHNNRAGRKAVKRFLKQECKCHGVSGSCTLRTCWLAMADFRKTGDYLWRKYNGAIQVVMNQDGTGFTVANKKFKKPTKNDLVYFENSPDYCIRDRDAGSLGTAGRVCNLTSRGMDSCEVMCCGRGYDTSRVTRMTKCECKFHWCCAVRCQDCLEALDVHTCKAPKSADWASPT</sequence>
<protein>
    <recommendedName>
        <fullName>Protein Wnt-2</fullName>
    </recommendedName>
</protein>